<comment type="function">
    <text evidence="2 4 5">Specific subunit of the TRAPP II complex, a highly conserved vesicle tethering complex that functions in the late Golgi as a guanine nucleotide exchanger (GEF) for the Golgi YPT1 GTPase. TRS65 plays a role in the YPT GEF activity of TRAPP II in concert with the two other TRAPP II-specific subunits TRS120 and TRS130. Involved in cell wall (1--&gt;6)-beta-glucan synthesis.</text>
</comment>
<comment type="pathway">
    <text>Glycan metabolism; beta-glucan biosynthesis.</text>
</comment>
<comment type="subunit">
    <text evidence="2 4 5 6">Part of the multisubunit TRAPP (transport protein particle) II complex composed of BET3, BET5, TRS20, TRS23, TRS31, TRS33, TRS65, TRS120 and TRS130. Interacts directly with TRS120 and TRS130.</text>
</comment>
<comment type="interaction">
    <interactant intactId="EBI-9900">
        <id>P32893</id>
    </interactant>
    <interactant intactId="EBI-19461">
        <id>Q03660</id>
        <label>TRS130</label>
    </interactant>
    <organismsDiffer>false</organismsDiffer>
    <experiments>4</experiments>
</comment>
<comment type="subcellular location">
    <subcellularLocation>
        <location>Cytoplasm</location>
    </subcellularLocation>
    <subcellularLocation>
        <location>Golgi apparatus</location>
        <location>cis-Golgi network</location>
    </subcellularLocation>
</comment>
<comment type="miscellaneous">
    <text evidence="3">Present with 1660 molecules/cell in log phase SD medium.</text>
</comment>
<feature type="chain" id="PRO_0000084328" description="Trafficking protein particle complex II-specific subunit 65">
    <location>
        <begin position="1"/>
        <end position="560"/>
    </location>
</feature>
<feature type="region of interest" description="Disordered" evidence="1">
    <location>
        <begin position="164"/>
        <end position="193"/>
    </location>
</feature>
<feature type="modified residue" description="Phosphoserine" evidence="7 8">
    <location>
        <position position="393"/>
    </location>
</feature>
<feature type="modified residue" description="Phosphoserine" evidence="8">
    <location>
        <position position="398"/>
    </location>
</feature>
<accession>P32893</accession>
<accession>D6VUU9</accession>
<evidence type="ECO:0000256" key="1">
    <source>
        <dbReference type="SAM" id="MobiDB-lite"/>
    </source>
</evidence>
<evidence type="ECO:0000269" key="2">
    <source>
    </source>
</evidence>
<evidence type="ECO:0000269" key="3">
    <source>
    </source>
</evidence>
<evidence type="ECO:0000269" key="4">
    <source>
    </source>
</evidence>
<evidence type="ECO:0000269" key="5">
    <source>
    </source>
</evidence>
<evidence type="ECO:0000269" key="6">
    <source>
    </source>
</evidence>
<evidence type="ECO:0007744" key="7">
    <source>
    </source>
</evidence>
<evidence type="ECO:0007744" key="8">
    <source>
    </source>
</evidence>
<organism>
    <name type="scientific">Saccharomyces cerevisiae (strain ATCC 204508 / S288c)</name>
    <name type="common">Baker's yeast</name>
    <dbReference type="NCBI Taxonomy" id="559292"/>
    <lineage>
        <taxon>Eukaryota</taxon>
        <taxon>Fungi</taxon>
        <taxon>Dikarya</taxon>
        <taxon>Ascomycota</taxon>
        <taxon>Saccharomycotina</taxon>
        <taxon>Saccharomycetes</taxon>
        <taxon>Saccharomycetales</taxon>
        <taxon>Saccharomycetaceae</taxon>
        <taxon>Saccharomyces</taxon>
    </lineage>
</organism>
<dbReference type="EMBL" id="L10667">
    <property type="protein sequence ID" value="AAA34727.1"/>
    <property type="molecule type" value="Genomic_DNA"/>
</dbReference>
<dbReference type="EMBL" id="Z72951">
    <property type="protein sequence ID" value="CAA97191.1"/>
    <property type="molecule type" value="Genomic_DNA"/>
</dbReference>
<dbReference type="EMBL" id="BK006941">
    <property type="protein sequence ID" value="DAA08260.1"/>
    <property type="molecule type" value="Genomic_DNA"/>
</dbReference>
<dbReference type="PIR" id="S42158">
    <property type="entry name" value="S42158"/>
</dbReference>
<dbReference type="RefSeq" id="NP_011682.1">
    <property type="nucleotide sequence ID" value="NM_001181295.1"/>
</dbReference>
<dbReference type="PDB" id="7E2C">
    <property type="method" value="EM"/>
    <property type="resolution" value="4.18 A"/>
    <property type="chains" value="K=1-559"/>
</dbReference>
<dbReference type="PDB" id="7E2D">
    <property type="method" value="EM"/>
    <property type="resolution" value="3.71 A"/>
    <property type="chains" value="K=1-560"/>
</dbReference>
<dbReference type="PDB" id="7E8S">
    <property type="method" value="EM"/>
    <property type="resolution" value="4.36 A"/>
    <property type="chains" value="K/V=1-560"/>
</dbReference>
<dbReference type="PDB" id="7E8T">
    <property type="method" value="EM"/>
    <property type="resolution" value="3.80 A"/>
    <property type="chains" value="K=1-560"/>
</dbReference>
<dbReference type="PDB" id="7E93">
    <property type="method" value="EM"/>
    <property type="resolution" value="6.54 A"/>
    <property type="chains" value="K/V=1-560"/>
</dbReference>
<dbReference type="PDB" id="7E94">
    <property type="method" value="EM"/>
    <property type="resolution" value="4.67 A"/>
    <property type="chains" value="K/V=1-560"/>
</dbReference>
<dbReference type="PDB" id="7EA3">
    <property type="method" value="EM"/>
    <property type="resolution" value="4.31 A"/>
    <property type="chains" value="K/X=1-560"/>
</dbReference>
<dbReference type="PDB" id="7U05">
    <property type="method" value="EM"/>
    <property type="resolution" value="3.70 A"/>
    <property type="chains" value="C/c=1-560"/>
</dbReference>
<dbReference type="PDB" id="7U06">
    <property type="method" value="EM"/>
    <property type="resolution" value="4.20 A"/>
    <property type="chains" value="C/c=1-560"/>
</dbReference>
<dbReference type="PDBsum" id="7E2C"/>
<dbReference type="PDBsum" id="7E2D"/>
<dbReference type="PDBsum" id="7E8S"/>
<dbReference type="PDBsum" id="7E8T"/>
<dbReference type="PDBsum" id="7E93"/>
<dbReference type="PDBsum" id="7E94"/>
<dbReference type="PDBsum" id="7EA3"/>
<dbReference type="PDBsum" id="7U05"/>
<dbReference type="PDBsum" id="7U06"/>
<dbReference type="EMDB" id="EMD-26254"/>
<dbReference type="EMDB" id="EMD-26255"/>
<dbReference type="EMDB" id="EMD-30954"/>
<dbReference type="EMDB" id="EMD-30955"/>
<dbReference type="EMDB" id="EMD-31021"/>
<dbReference type="EMDB" id="EMD-31022"/>
<dbReference type="EMDB" id="EMD-31027"/>
<dbReference type="EMDB" id="EMD-31028"/>
<dbReference type="EMDB" id="EMD-31038"/>
<dbReference type="SMR" id="P32893"/>
<dbReference type="BioGRID" id="33418">
    <property type="interactions" value="343"/>
</dbReference>
<dbReference type="ComplexPortal" id="CPX-1939">
    <property type="entry name" value="TRAPP II complex"/>
</dbReference>
<dbReference type="DIP" id="DIP-5104N"/>
<dbReference type="FunCoup" id="P32893">
    <property type="interactions" value="73"/>
</dbReference>
<dbReference type="IntAct" id="P32893">
    <property type="interactions" value="13"/>
</dbReference>
<dbReference type="MINT" id="P32893"/>
<dbReference type="STRING" id="4932.YGR166W"/>
<dbReference type="iPTMnet" id="P32893"/>
<dbReference type="PaxDb" id="4932-YGR166W"/>
<dbReference type="PeptideAtlas" id="P32893"/>
<dbReference type="EnsemblFungi" id="YGR166W_mRNA">
    <property type="protein sequence ID" value="YGR166W"/>
    <property type="gene ID" value="YGR166W"/>
</dbReference>
<dbReference type="GeneID" id="853076"/>
<dbReference type="KEGG" id="sce:YGR166W"/>
<dbReference type="AGR" id="SGD:S000003398"/>
<dbReference type="SGD" id="S000003398">
    <property type="gene designation" value="TRS65"/>
</dbReference>
<dbReference type="VEuPathDB" id="FungiDB:YGR166W"/>
<dbReference type="eggNOG" id="ENOG502QSDT">
    <property type="taxonomic scope" value="Eukaryota"/>
</dbReference>
<dbReference type="HOGENOM" id="CLU_042571_0_0_1"/>
<dbReference type="InParanoid" id="P32893"/>
<dbReference type="OMA" id="VMNNGYN"/>
<dbReference type="OrthoDB" id="4048430at2759"/>
<dbReference type="BioCyc" id="YEAST:G3O-30864-MONOMER"/>
<dbReference type="UniPathway" id="UPA00636"/>
<dbReference type="BioGRID-ORCS" id="853076">
    <property type="hits" value="0 hits in 10 CRISPR screens"/>
</dbReference>
<dbReference type="PRO" id="PR:P32893"/>
<dbReference type="Proteomes" id="UP000002311">
    <property type="component" value="Chromosome VII"/>
</dbReference>
<dbReference type="RNAct" id="P32893">
    <property type="molecule type" value="protein"/>
</dbReference>
<dbReference type="GO" id="GO:0005829">
    <property type="term" value="C:cytosol"/>
    <property type="evidence" value="ECO:0007669"/>
    <property type="project" value="GOC"/>
</dbReference>
<dbReference type="GO" id="GO:0005802">
    <property type="term" value="C:trans-Golgi network"/>
    <property type="evidence" value="ECO:0000314"/>
    <property type="project" value="SGD"/>
</dbReference>
<dbReference type="GO" id="GO:1990071">
    <property type="term" value="C:TRAPPII protein complex"/>
    <property type="evidence" value="ECO:0000314"/>
    <property type="project" value="SGD"/>
</dbReference>
<dbReference type="GO" id="GO:0051274">
    <property type="term" value="P:beta-glucan biosynthetic process"/>
    <property type="evidence" value="ECO:0007669"/>
    <property type="project" value="UniProtKB-UniPathway"/>
</dbReference>
<dbReference type="GO" id="GO:0071555">
    <property type="term" value="P:cell wall organization"/>
    <property type="evidence" value="ECO:0007669"/>
    <property type="project" value="UniProtKB-KW"/>
</dbReference>
<dbReference type="GO" id="GO:0006891">
    <property type="term" value="P:intra-Golgi vesicle-mediated transport"/>
    <property type="evidence" value="ECO:0000316"/>
    <property type="project" value="SGD"/>
</dbReference>
<dbReference type="GO" id="GO:0065003">
    <property type="term" value="P:protein-containing complex assembly"/>
    <property type="evidence" value="ECO:0000316"/>
    <property type="project" value="SGD"/>
</dbReference>
<dbReference type="GO" id="GO:0042147">
    <property type="term" value="P:retrograde transport, endosome to Golgi"/>
    <property type="evidence" value="ECO:0000303"/>
    <property type="project" value="ComplexPortal"/>
</dbReference>
<dbReference type="InterPro" id="IPR055425">
    <property type="entry name" value="IgD1_Trs65"/>
</dbReference>
<dbReference type="InterPro" id="IPR055426">
    <property type="entry name" value="IgD2_Trs65"/>
</dbReference>
<dbReference type="InterPro" id="IPR055420">
    <property type="entry name" value="IgD3_Trs65"/>
</dbReference>
<dbReference type="InterPro" id="IPR024662">
    <property type="entry name" value="Trs65"/>
</dbReference>
<dbReference type="PANTHER" id="PTHR28159">
    <property type="entry name" value="TRAFFICKING PROTEIN PARTICLE COMPLEX II-SPECIFIC SUBUNIT 65"/>
    <property type="match status" value="1"/>
</dbReference>
<dbReference type="PANTHER" id="PTHR28159:SF1">
    <property type="entry name" value="TRAFFICKING PROTEIN PARTICLE COMPLEX II-SPECIFIC SUBUNIT 65"/>
    <property type="match status" value="1"/>
</dbReference>
<dbReference type="Pfam" id="PF23645">
    <property type="entry name" value="IgD1_Trs65"/>
    <property type="match status" value="1"/>
</dbReference>
<dbReference type="Pfam" id="PF23646">
    <property type="entry name" value="IgD2_Trs65"/>
    <property type="match status" value="1"/>
</dbReference>
<dbReference type="Pfam" id="PF12735">
    <property type="entry name" value="IgD3_Trs65"/>
    <property type="match status" value="1"/>
</dbReference>
<name>TRS65_YEAST</name>
<gene>
    <name type="primary">TRS65</name>
    <name type="synonym">KRE11</name>
    <name type="ordered locus">YGR166W</name>
</gene>
<reference key="1">
    <citation type="journal article" date="1993" name="Genetics">
        <title>A mutational analysis of killer toxin resistance in Saccharomyces cerevisiae identifies new genes involved in cell wall (1--&gt;6)-beta-glucan synthesis.</title>
        <authorList>
            <person name="Brown J.L."/>
            <person name="Kossaczka Z."/>
            <person name="Jiang B."/>
            <person name="Bussey H."/>
        </authorList>
    </citation>
    <scope>NUCLEOTIDE SEQUENCE [GENOMIC DNA]</scope>
</reference>
<reference key="2">
    <citation type="journal article" date="1997" name="Yeast">
        <title>Sequence analysis of 203 kilobases from Saccharomyces cerevisiae chromosome VII.</title>
        <authorList>
            <person name="Rieger M."/>
            <person name="Brueckner M."/>
            <person name="Schaefer M."/>
            <person name="Mueller-Auer S."/>
        </authorList>
    </citation>
    <scope>NUCLEOTIDE SEQUENCE [GENOMIC DNA]</scope>
    <source>
        <strain>ATCC 204508 / S288c</strain>
    </source>
</reference>
<reference key="3">
    <citation type="journal article" date="1997" name="Nature">
        <title>The nucleotide sequence of Saccharomyces cerevisiae chromosome VII.</title>
        <authorList>
            <person name="Tettelin H."/>
            <person name="Agostoni-Carbone M.L."/>
            <person name="Albermann K."/>
            <person name="Albers M."/>
            <person name="Arroyo J."/>
            <person name="Backes U."/>
            <person name="Barreiros T."/>
            <person name="Bertani I."/>
            <person name="Bjourson A.J."/>
            <person name="Brueckner M."/>
            <person name="Bruschi C.V."/>
            <person name="Carignani G."/>
            <person name="Castagnoli L."/>
            <person name="Cerdan E."/>
            <person name="Clemente M.L."/>
            <person name="Coblenz A."/>
            <person name="Coglievina M."/>
            <person name="Coissac E."/>
            <person name="Defoor E."/>
            <person name="Del Bino S."/>
            <person name="Delius H."/>
            <person name="Delneri D."/>
            <person name="de Wergifosse P."/>
            <person name="Dujon B."/>
            <person name="Durand P."/>
            <person name="Entian K.-D."/>
            <person name="Eraso P."/>
            <person name="Escribano V."/>
            <person name="Fabiani L."/>
            <person name="Fartmann B."/>
            <person name="Feroli F."/>
            <person name="Feuermann M."/>
            <person name="Frontali L."/>
            <person name="Garcia-Gonzalez M."/>
            <person name="Garcia-Saez M.I."/>
            <person name="Goffeau A."/>
            <person name="Guerreiro P."/>
            <person name="Hani J."/>
            <person name="Hansen M."/>
            <person name="Hebling U."/>
            <person name="Hernandez K."/>
            <person name="Heumann K."/>
            <person name="Hilger F."/>
            <person name="Hofmann B."/>
            <person name="Indge K.J."/>
            <person name="James C.M."/>
            <person name="Klima R."/>
            <person name="Koetter P."/>
            <person name="Kramer B."/>
            <person name="Kramer W."/>
            <person name="Lauquin G."/>
            <person name="Leuther H."/>
            <person name="Louis E.J."/>
            <person name="Maillier E."/>
            <person name="Marconi A."/>
            <person name="Martegani E."/>
            <person name="Mazon M.J."/>
            <person name="Mazzoni C."/>
            <person name="McReynolds A.D.K."/>
            <person name="Melchioretto P."/>
            <person name="Mewes H.-W."/>
            <person name="Minenkova O."/>
            <person name="Mueller-Auer S."/>
            <person name="Nawrocki A."/>
            <person name="Netter P."/>
            <person name="Neu R."/>
            <person name="Nombela C."/>
            <person name="Oliver S.G."/>
            <person name="Panzeri L."/>
            <person name="Paoluzi S."/>
            <person name="Plevani P."/>
            <person name="Portetelle D."/>
            <person name="Portillo F."/>
            <person name="Potier S."/>
            <person name="Purnelle B."/>
            <person name="Rieger M."/>
            <person name="Riles L."/>
            <person name="Rinaldi T."/>
            <person name="Robben J."/>
            <person name="Rodrigues-Pousada C."/>
            <person name="Rodriguez-Belmonte E."/>
            <person name="Rodriguez-Torres A.M."/>
            <person name="Rose M."/>
            <person name="Ruzzi M."/>
            <person name="Saliola M."/>
            <person name="Sanchez-Perez M."/>
            <person name="Schaefer B."/>
            <person name="Schaefer M."/>
            <person name="Scharfe M."/>
            <person name="Schmidheini T."/>
            <person name="Schreer A."/>
            <person name="Skala J."/>
            <person name="Souciet J.-L."/>
            <person name="Steensma H.Y."/>
            <person name="Talla E."/>
            <person name="Thierry A."/>
            <person name="Vandenbol M."/>
            <person name="van der Aart Q.J.M."/>
            <person name="Van Dyck L."/>
            <person name="Vanoni M."/>
            <person name="Verhasselt P."/>
            <person name="Voet M."/>
            <person name="Volckaert G."/>
            <person name="Wambutt R."/>
            <person name="Watson M.D."/>
            <person name="Weber N."/>
            <person name="Wedler E."/>
            <person name="Wedler H."/>
            <person name="Wipfli P."/>
            <person name="Wolf K."/>
            <person name="Wright L.F."/>
            <person name="Zaccaria P."/>
            <person name="Zimmermann M."/>
            <person name="Zollner A."/>
            <person name="Kleine K."/>
        </authorList>
    </citation>
    <scope>NUCLEOTIDE SEQUENCE [LARGE SCALE GENOMIC DNA]</scope>
    <source>
        <strain>ATCC 204508 / S288c</strain>
    </source>
</reference>
<reference key="4">
    <citation type="journal article" date="2014" name="G3 (Bethesda)">
        <title>The reference genome sequence of Saccharomyces cerevisiae: Then and now.</title>
        <authorList>
            <person name="Engel S.R."/>
            <person name="Dietrich F.S."/>
            <person name="Fisk D.G."/>
            <person name="Binkley G."/>
            <person name="Balakrishnan R."/>
            <person name="Costanzo M.C."/>
            <person name="Dwight S.S."/>
            <person name="Hitz B.C."/>
            <person name="Karra K."/>
            <person name="Nash R.S."/>
            <person name="Weng S."/>
            <person name="Wong E.D."/>
            <person name="Lloyd P."/>
            <person name="Skrzypek M.S."/>
            <person name="Miyasato S.R."/>
            <person name="Simison M."/>
            <person name="Cherry J.M."/>
        </authorList>
    </citation>
    <scope>GENOME REANNOTATION</scope>
    <source>
        <strain>ATCC 204508 / S288c</strain>
    </source>
</reference>
<reference key="5">
    <citation type="journal article" date="1998" name="EMBO J.">
        <title>TRAPP, a highly conserved novel complex on the cis-Golgi that mediates vesicle docking and fusion.</title>
        <authorList>
            <person name="Sacher M."/>
            <person name="Jiang Y."/>
            <person name="Barrowman J."/>
            <person name="Scarpa A."/>
            <person name="Burston J."/>
            <person name="Zhang L."/>
            <person name="Schieltz D."/>
            <person name="Yates J.R. III"/>
            <person name="Abeliovich H."/>
            <person name="Ferro-Novick S."/>
        </authorList>
    </citation>
    <scope>IDENTIFICATION IN THE TRAPP II COMPLEX</scope>
</reference>
<reference key="6">
    <citation type="journal article" date="2001" name="Mol. Cell">
        <title>TRAPP I implicated in the specificity of tethering in ER-to-Golgi transport.</title>
        <authorList>
            <person name="Sacher M."/>
            <person name="Barrowman J."/>
            <person name="Wang W."/>
            <person name="Horecka J."/>
            <person name="Zhang Y."/>
            <person name="Pypaert M."/>
            <person name="Ferro-Novick S."/>
        </authorList>
    </citation>
    <scope>FUNCTION OF THE TRAPP II COMPLEX</scope>
    <scope>IDENTIFICATION IN THE TRAPP II COMPLEX</scope>
    <scope>SUBCELLULAR LOCATION</scope>
</reference>
<reference key="7">
    <citation type="journal article" date="2003" name="Nature">
        <title>Global analysis of protein expression in yeast.</title>
        <authorList>
            <person name="Ghaemmaghami S."/>
            <person name="Huh W.-K."/>
            <person name="Bower K."/>
            <person name="Howson R.W."/>
            <person name="Belle A."/>
            <person name="Dephoure N."/>
            <person name="O'Shea E.K."/>
            <person name="Weissman J.S."/>
        </authorList>
    </citation>
    <scope>LEVEL OF PROTEIN EXPRESSION [LARGE SCALE ANALYSIS]</scope>
</reference>
<reference key="8">
    <citation type="journal article" date="2005" name="Mol. Cell. Proteomics">
        <title>Quantitative phosphoproteomics applied to the yeast pheromone signaling pathway.</title>
        <authorList>
            <person name="Gruhler A."/>
            <person name="Olsen J.V."/>
            <person name="Mohammed S."/>
            <person name="Mortensen P."/>
            <person name="Faergeman N.J."/>
            <person name="Mann M."/>
            <person name="Jensen O.N."/>
        </authorList>
    </citation>
    <scope>IDENTIFICATION BY MASS SPECTROMETRY [LARGE SCALE ANALYSIS]</scope>
    <source>
        <strain>YAL6B</strain>
    </source>
</reference>
<reference key="9">
    <citation type="journal article" date="2007" name="J. Proteome Res.">
        <title>Large-scale phosphorylation analysis of alpha-factor-arrested Saccharomyces cerevisiae.</title>
        <authorList>
            <person name="Li X."/>
            <person name="Gerber S.A."/>
            <person name="Rudner A.D."/>
            <person name="Beausoleil S.A."/>
            <person name="Haas W."/>
            <person name="Villen J."/>
            <person name="Elias J.E."/>
            <person name="Gygi S.P."/>
        </authorList>
    </citation>
    <scope>IDENTIFICATION BY MASS SPECTROMETRY [LARGE SCALE ANALYSIS]</scope>
    <source>
        <strain>ADR376</strain>
    </source>
</reference>
<reference key="10">
    <citation type="journal article" date="2007" name="Mol. Biol. Cell">
        <title>The role of Trs65 in the Ypt/Rab guanine nucleotide exchange factor function of the TRAPP II complex.</title>
        <authorList>
            <person name="Liang Y."/>
            <person name="Morozova N."/>
            <person name="Tokarev A.A."/>
            <person name="Mulholland J.W."/>
            <person name="Segev N."/>
        </authorList>
    </citation>
    <scope>FUNCTION</scope>
    <scope>SUBCELLULAR LOCATION</scope>
    <scope>INTERACTION WITH TRS120 AND TRS130</scope>
</reference>
<reference key="11">
    <citation type="journal article" date="2008" name="Mol. Cell. Proteomics">
        <title>A multidimensional chromatography technology for in-depth phosphoproteome analysis.</title>
        <authorList>
            <person name="Albuquerque C.P."/>
            <person name="Smolka M.B."/>
            <person name="Payne S.H."/>
            <person name="Bafna V."/>
            <person name="Eng J."/>
            <person name="Zhou H."/>
        </authorList>
    </citation>
    <scope>PHOSPHORYLATION [LARGE SCALE ANALYSIS] AT SER-393</scope>
    <scope>IDENTIFICATION BY MASS SPECTROMETRY [LARGE SCALE ANALYSIS]</scope>
</reference>
<reference key="12">
    <citation type="journal article" date="2009" name="Science">
        <title>Global analysis of Cdk1 substrate phosphorylation sites provides insights into evolution.</title>
        <authorList>
            <person name="Holt L.J."/>
            <person name="Tuch B.B."/>
            <person name="Villen J."/>
            <person name="Johnson A.D."/>
            <person name="Gygi S.P."/>
            <person name="Morgan D.O."/>
        </authorList>
    </citation>
    <scope>PHOSPHORYLATION [LARGE SCALE ANALYSIS] AT SER-393 AND SER-398</scope>
    <scope>IDENTIFICATION BY MASS SPECTROMETRY [LARGE SCALE ANALYSIS]</scope>
</reference>
<reference key="13">
    <citation type="journal article" date="2010" name="Nat. Struct. Mol. Biol.">
        <title>Molecular architecture of the TRAPPII complex and implications for vesicle tethering.</title>
        <authorList>
            <person name="Yip C.K."/>
            <person name="Berscheminski J."/>
            <person name="Walz T."/>
        </authorList>
    </citation>
    <scope>IDENTIFICATION IN THE TRAP II COMPLEX</scope>
    <scope>FUNCTION OF THE TRAP II COMPLEX</scope>
</reference>
<proteinExistence type="evidence at protein level"/>
<keyword id="KW-0002">3D-structure</keyword>
<keyword id="KW-0961">Cell wall biogenesis/degradation</keyword>
<keyword id="KW-0963">Cytoplasm</keyword>
<keyword id="KW-0333">Golgi apparatus</keyword>
<keyword id="KW-0597">Phosphoprotein</keyword>
<keyword id="KW-1185">Reference proteome</keyword>
<keyword id="KW-0813">Transport</keyword>
<protein>
    <recommendedName>
        <fullName>Trafficking protein particle complex II-specific subunit 65</fullName>
        <shortName>TRAPP II-specific subunit 65</shortName>
    </recommendedName>
    <alternativeName>
        <fullName>Beta-glucan synthesis-associated protein TRS65</fullName>
    </alternativeName>
    <alternativeName>
        <fullName>Killer toxin-resistance protein 11</fullName>
    </alternativeName>
    <alternativeName>
        <fullName>Transport protein particle 65 kDa subunit</fullName>
    </alternativeName>
</protein>
<sequence>MECFVPLRCDLDGSNIEQLRQSHLSRKFIIFDEQLNLWLWFQGNSQENKRFVLQNMIILINEAQVTRTSTIDDYFTQVENNENLWRLKNDCCSKILFKSNVVMNNGYNNQIKFVFEYKSVDANFNNQDSLQDPQAKYTLDKYSSEEILPSFEPVYSWSSAATKSSKNTNNHLEKNNRATHRVSSKNSEVHEADVSRNPNTFTLKLQYPIFSLLNMRLRNISLKSEHCILSSLDFQTSKASEQLTKKFIYPQEHNSFLKLNFQEISYKLIDGTSQIELDPICPLKVPLTAFSYDSISATFKLVLLPKSTQPHRVKITLAYELELHPNLKLPVRTSWETEVTLKRSMPISSTSSQYSSNNNNTNHSASFNGAANNVNSGGLANLRLGGVSSSRFSLGAASTTSLVNSKLSNVKFKFINSNIKVIKGEKFTMRLQIINSSSSPLDLVVYYNNTINPIPSANNVRNSNGINNCGMNNGTIPNSPLTLENQYQLHNKYRKIAEGIILLSNDYKIPVVPPRETYFADLRFIGIMSGYYGTLSGLKVLDLNTNELIEVGNGASVLIQ</sequence>